<reference key="1">
    <citation type="journal article" date="2005" name="Int. J. Parasitol.">
        <title>Annexin-like alpha giardins: a new cytoskeletal gene family in Giardia lamblia.</title>
        <authorList>
            <person name="Weiland M.E.-L."/>
            <person name="McArthur A.G."/>
            <person name="Morrison H.G."/>
            <person name="Sogin M.L."/>
            <person name="Svard S.G."/>
        </authorList>
    </citation>
    <scope>NUCLEOTIDE SEQUENCE [GENOMIC DNA]</scope>
    <source>
        <strain>ATCC 50803 / WB-C6</strain>
    </source>
</reference>
<name>GIA4_GIAIN</name>
<organism>
    <name type="scientific">Giardia intestinalis</name>
    <name type="common">Giardia lamblia</name>
    <dbReference type="NCBI Taxonomy" id="5741"/>
    <lineage>
        <taxon>Eukaryota</taxon>
        <taxon>Metamonada</taxon>
        <taxon>Diplomonadida</taxon>
        <taxon>Hexamitidae</taxon>
        <taxon>Giardiinae</taxon>
        <taxon>Giardia</taxon>
    </lineage>
</organism>
<protein>
    <recommendedName>
        <fullName>Giardin subunit alpha-4</fullName>
    </recommendedName>
</protein>
<sequence length="296" mass="33614">MSATVSTVSADLHKAIDAGDEDKITKITASYGSEQRDKIIPAYHANYGIPPSEAIRKAFKTGFYETMIVHAWTSRFELRAKLIHESIKGKIDVITLLDLVIACMPDDWYGTKVCYTKLYGRELVREIDEVIGVGTPWQSLVSGWVKHDRKYRKSIKSDAEAFRMALDSDNYEVLGSMLATSVPDEWMRIAAAYEETTGMPIDQAIASRYVKVDQTALILAHHWLCDPGQAAAYICSQCCAERKGNYARICRFTSMMYDHCLKCKYAYRAYGSLAMDIRKCFEPKLAKHLLVFWRVE</sequence>
<accession>Q4VPQ3</accession>
<proteinExistence type="inferred from homology"/>
<feature type="chain" id="PRO_0000288027" description="Giardin subunit alpha-4">
    <location>
        <begin position="1"/>
        <end position="296"/>
    </location>
</feature>
<feature type="repeat" description="Annexin 1" evidence="2">
    <location>
        <begin position="3"/>
        <end position="72"/>
    </location>
</feature>
<feature type="repeat" description="Annexin 2" evidence="2">
    <location>
        <begin position="74"/>
        <end position="146"/>
    </location>
</feature>
<feature type="repeat" description="Annexin 3" evidence="2">
    <location>
        <begin position="153"/>
        <end position="223"/>
    </location>
</feature>
<feature type="repeat" description="Annexin 4" evidence="2">
    <location>
        <begin position="226"/>
        <end position="294"/>
    </location>
</feature>
<keyword id="KW-0041">Annexin</keyword>
<keyword id="KW-0963">Cytoplasm</keyword>
<keyword id="KW-0206">Cytoskeleton</keyword>
<keyword id="KW-0493">Microtubule</keyword>
<keyword id="KW-0677">Repeat</keyword>
<dbReference type="EMBL" id="AY781319">
    <property type="protein sequence ID" value="AAX07970.1"/>
    <property type="molecule type" value="Genomic_DNA"/>
</dbReference>
<dbReference type="RefSeq" id="XP_001706962.1">
    <property type="nucleotide sequence ID" value="XM_001706910.1"/>
</dbReference>
<dbReference type="SMR" id="Q4VPQ3"/>
<dbReference type="GeneID" id="5699857"/>
<dbReference type="KEGG" id="gla:GL50803_007799"/>
<dbReference type="VEuPathDB" id="GiardiaDB:DHA2_7799"/>
<dbReference type="VEuPathDB" id="GiardiaDB:GL50581_1669"/>
<dbReference type="VEuPathDB" id="GiardiaDB:GL50803_007799"/>
<dbReference type="VEuPathDB" id="GiardiaDB:QR46_1876"/>
<dbReference type="OrthoDB" id="10248302at2759"/>
<dbReference type="GO" id="GO:0005737">
    <property type="term" value="C:cytoplasm"/>
    <property type="evidence" value="ECO:0007669"/>
    <property type="project" value="UniProtKB-KW"/>
</dbReference>
<dbReference type="GO" id="GO:0005874">
    <property type="term" value="C:microtubule"/>
    <property type="evidence" value="ECO:0007669"/>
    <property type="project" value="UniProtKB-KW"/>
</dbReference>
<dbReference type="GO" id="GO:0005886">
    <property type="term" value="C:plasma membrane"/>
    <property type="evidence" value="ECO:0007669"/>
    <property type="project" value="TreeGrafter"/>
</dbReference>
<dbReference type="GO" id="GO:0005509">
    <property type="term" value="F:calcium ion binding"/>
    <property type="evidence" value="ECO:0007669"/>
    <property type="project" value="InterPro"/>
</dbReference>
<dbReference type="GO" id="GO:0005544">
    <property type="term" value="F:calcium-dependent phospholipid binding"/>
    <property type="evidence" value="ECO:0007669"/>
    <property type="project" value="InterPro"/>
</dbReference>
<dbReference type="GO" id="GO:0001786">
    <property type="term" value="F:phosphatidylserine binding"/>
    <property type="evidence" value="ECO:0007669"/>
    <property type="project" value="TreeGrafter"/>
</dbReference>
<dbReference type="GO" id="GO:0007010">
    <property type="term" value="P:cytoskeleton organization"/>
    <property type="evidence" value="ECO:0007669"/>
    <property type="project" value="InterPro"/>
</dbReference>
<dbReference type="Gene3D" id="1.10.220.10">
    <property type="entry name" value="Annexin"/>
    <property type="match status" value="4"/>
</dbReference>
<dbReference type="InterPro" id="IPR008088">
    <property type="entry name" value="Alpha_giardin"/>
</dbReference>
<dbReference type="InterPro" id="IPR018502">
    <property type="entry name" value="Annexin_repeat"/>
</dbReference>
<dbReference type="InterPro" id="IPR037104">
    <property type="entry name" value="Annexin_sf"/>
</dbReference>
<dbReference type="PANTHER" id="PTHR10502">
    <property type="entry name" value="ANNEXIN"/>
    <property type="match status" value="1"/>
</dbReference>
<dbReference type="PANTHER" id="PTHR10502:SF102">
    <property type="entry name" value="ANNEXIN B11"/>
    <property type="match status" value="1"/>
</dbReference>
<dbReference type="Pfam" id="PF22293">
    <property type="entry name" value="ANXE1_4th"/>
    <property type="match status" value="1"/>
</dbReference>
<dbReference type="PRINTS" id="PR01712">
    <property type="entry name" value="ALPHAGIARDIN"/>
</dbReference>
<dbReference type="SUPFAM" id="SSF47874">
    <property type="entry name" value="Annexin"/>
    <property type="match status" value="1"/>
</dbReference>
<dbReference type="PROSITE" id="PS51897">
    <property type="entry name" value="ANNEXIN_2"/>
    <property type="match status" value="4"/>
</dbReference>
<comment type="function">
    <text evidence="1">Giardins are involved in parasite attachment to the intestinal mucosa and in the cytoskeletal disassembly and reassembly that marks the transition from infectious trophozoite to transmissible cyst. They may interact with other cytoskeletal proteins such as microtubules in the microribbons or crossbridges, to maintain the integrity of the ventral disk (By similarity).</text>
</comment>
<comment type="subcellular location">
    <subcellularLocation>
        <location evidence="1">Cytoplasm</location>
        <location evidence="1">Cytoskeleton</location>
    </subcellularLocation>
</comment>
<comment type="similarity">
    <text evidence="2">Belongs to the annexin family. Giardin subunit alpha subfamily.</text>
</comment>
<evidence type="ECO:0000250" key="1"/>
<evidence type="ECO:0000255" key="2">
    <source>
        <dbReference type="PROSITE-ProRule" id="PRU01245"/>
    </source>
</evidence>